<protein>
    <recommendedName>
        <fullName evidence="7">S-adenosyl-L-methionine:benzoic acid/salicylic acid carboxyl methyltransferase 2</fullName>
        <shortName evidence="7">PhBSMT2</shortName>
        <ecNumber evidence="5">2.1.1.273</ecNumber>
        <ecNumber evidence="5">2.1.1.274</ecNumber>
    </recommendedName>
</protein>
<name>BSMT2_PETHY</name>
<accession>Q84UB4</accession>
<keyword id="KW-0460">Magnesium</keyword>
<keyword id="KW-0479">Metal-binding</keyword>
<keyword id="KW-0489">Methyltransferase</keyword>
<keyword id="KW-0949">S-adenosyl-L-methionine</keyword>
<keyword id="KW-0808">Transferase</keyword>
<proteinExistence type="evidence at protein level"/>
<organism>
    <name type="scientific">Petunia hybrida</name>
    <name type="common">Petunia</name>
    <dbReference type="NCBI Taxonomy" id="4102"/>
    <lineage>
        <taxon>Eukaryota</taxon>
        <taxon>Viridiplantae</taxon>
        <taxon>Streptophyta</taxon>
        <taxon>Embryophyta</taxon>
        <taxon>Tracheophyta</taxon>
        <taxon>Spermatophyta</taxon>
        <taxon>Magnoliopsida</taxon>
        <taxon>eudicotyledons</taxon>
        <taxon>Gunneridae</taxon>
        <taxon>Pentapetalae</taxon>
        <taxon>asterids</taxon>
        <taxon>lamiids</taxon>
        <taxon>Solanales</taxon>
        <taxon>Solanaceae</taxon>
        <taxon>Petunioideae</taxon>
        <taxon>Petunia</taxon>
    </lineage>
</organism>
<reference key="1">
    <citation type="journal article" date="2003" name="Plant Cell">
        <title>Regulation of methylbenzoate emission after pollination in snapdragon and petunia flowers.</title>
        <authorList>
            <person name="Negre F."/>
            <person name="Kish C.M."/>
            <person name="Boatright J."/>
            <person name="Underwood B."/>
            <person name="Shibuya K."/>
            <person name="Wagner C."/>
            <person name="Clark D.G."/>
            <person name="Dudareva N."/>
        </authorList>
    </citation>
    <scope>NUCLEOTIDE SEQUENCE [MRNA]</scope>
    <scope>FUNCTION</scope>
    <scope>CATALYTIC ACTIVITY</scope>
    <scope>BIOPHYSICOCHEMICAL PROPERTIES</scope>
    <scope>TISSUE SPECIFICITY</scope>
    <scope>REPRESSION BY POLLINATION AND ETHYLENE</scope>
    <scope>PATHWAY</scope>
    <source>
        <strain>cv. Mitchell</strain>
    </source>
</reference>
<reference key="2">
    <citation type="journal article" date="2012" name="Plant Cell">
        <title>The R2R3-MYB-like regulatory factor EOBI, acting downstream of EOBII, regulates scent production by activating ODO1 and structural scent-related genes in petunia.</title>
        <authorList>
            <person name="Spitzer-Rimon B."/>
            <person name="Farhi M."/>
            <person name="Albo B."/>
            <person name="Cna'ani A."/>
            <person name="Ben Zvi M.M."/>
            <person name="Masci T."/>
            <person name="Edelbaum O."/>
            <person name="Yu Y."/>
            <person name="Shklarman E."/>
            <person name="Ovadis M."/>
            <person name="Vainstein A."/>
        </authorList>
    </citation>
    <scope>INDUCTION BY EOBI</scope>
    <source>
        <strain>cv. W115</strain>
    </source>
</reference>
<gene>
    <name evidence="7" type="primary">BSMT2</name>
</gene>
<comment type="function">
    <text evidence="5">Converts benzoic acid into the volatile ester methyl benzoates (PubMed:14630969). This scent, mostly produced in a rhythmical, diurnal manner, attracts the pollinators (PubMed:14630969).</text>
</comment>
<comment type="catalytic activity">
    <reaction evidence="5">
        <text>benzoate + S-adenosyl-L-methionine = methyl benzoate + S-adenosyl-L-homocysteine</text>
        <dbReference type="Rhea" id="RHEA:36099"/>
        <dbReference type="ChEBI" id="CHEBI:16150"/>
        <dbReference type="ChEBI" id="CHEBI:57856"/>
        <dbReference type="ChEBI" id="CHEBI:59789"/>
        <dbReference type="ChEBI" id="CHEBI:72775"/>
        <dbReference type="EC" id="2.1.1.273"/>
    </reaction>
    <physiologicalReaction direction="left-to-right" evidence="5">
        <dbReference type="Rhea" id="RHEA:36100"/>
    </physiologicalReaction>
</comment>
<comment type="catalytic activity">
    <reaction evidence="5">
        <text>salicylate + S-adenosyl-L-methionine = methyl salicylate + S-adenosyl-L-homocysteine</text>
        <dbReference type="Rhea" id="RHEA:36095"/>
        <dbReference type="ChEBI" id="CHEBI:30762"/>
        <dbReference type="ChEBI" id="CHEBI:31832"/>
        <dbReference type="ChEBI" id="CHEBI:57856"/>
        <dbReference type="ChEBI" id="CHEBI:59789"/>
        <dbReference type="EC" id="2.1.1.274"/>
    </reaction>
    <physiologicalReaction direction="left-to-right" evidence="5">
        <dbReference type="Rhea" id="RHEA:36096"/>
    </physiologicalReaction>
</comment>
<comment type="biophysicochemical properties">
    <kinetics>
        <KM evidence="5">2.76 uM for S-adenosyl-L-methionine (in the presence of salicylic acid)</KM>
        <KM evidence="5">30.78 uM for S-adenosyl-L-methionine (in the presence of benzoic acid)</KM>
        <KM evidence="5">69.6 uM for salicylic acid</KM>
        <KM evidence="5">2355.9 uM for benzoic acid</KM>
        <text evidence="5">kcat is 0.0057 sec(-1) with S-adenosyl-L-methionine (in the presence of salicylic acid) (PubMed:14630969). kcat is 0.0079 sec(-1) with S-adenosyl-L-methionine (in the presence of benzoic acid) (PubMed:14630969). kcat is 0.004 sec(-1) with salicylic acid as substrate (PubMed:14630969). kcat is 0.0032 sec(-1) with benzoic acid as substrate (PubMed:14630969).</text>
    </kinetics>
    <phDependence>
        <text evidence="5">Optimum pH is 7-7.5 with salicylic acid as substrate (PubMed:14630969). Optimum pH is 6.5-7.5 with benzoic acid as substrate (PubMed:14630969).</text>
    </phDependence>
</comment>
<comment type="pathway">
    <text evidence="5">Aromatic compound metabolism.</text>
</comment>
<comment type="tissue specificity">
    <text evidence="5">Predominantly expressed in petal limbs and tubes of corollas.</text>
</comment>
<comment type="induction">
    <text evidence="5 6">Triggered by EOBI in flowers (PubMed:23275577). Fades out in flower petals after pollination, thus resulting in a decrease in methylbenzoate emission (PubMed:14630969). Strongly repressed by ethylene (PubMed:14630969).</text>
</comment>
<comment type="similarity">
    <text evidence="8">Belongs to the methyltransferase superfamily. Type-7 methyltransferase family.</text>
</comment>
<sequence>MEVVEVLHMNGGNGDSSYANNSLVQQKVILMTKPITEQAMIDLYSSLFPETLCIADLGCSLGANTFLVVSQLVKIVEKERKKHGFKSPEFYFHFNDLPGNDFNTLFQSLGAFQEDLRKHIGESFGPCFFSGVPGSFYTRLFPSKSLHFVYSSYSLMWLSQVPNGIENNKGNIYMARTSPLSVIKAYYKQYEIDFSNFLKYRSEELMKGGKMVLTLLGRESEDPTSKECCYIWELLAMALNKLVEEGLIKEEKVDAFNIPQYTPSPAEVKYIVEKEGSFTINRLETSRVHWNASNNEKNGGYNVSRCMRAVAEPLLVSHFDKELMDLVFHKYEEIISDCMSKEKTEFINVIVSLTKIN</sequence>
<feature type="chain" id="PRO_0000451512" description="S-adenosyl-L-methionine:benzoic acid/salicylic acid carboxyl methyltransferase 2">
    <location>
        <begin position="1"/>
        <end position="357"/>
    </location>
</feature>
<feature type="binding site" evidence="2">
    <location>
        <position position="18"/>
    </location>
    <ligand>
        <name>S-adenosyl-L-homocysteine</name>
        <dbReference type="ChEBI" id="CHEBI:57856"/>
    </ligand>
</feature>
<feature type="binding site" evidence="2">
    <location>
        <position position="25"/>
    </location>
    <ligand>
        <name>benzoate</name>
        <dbReference type="ChEBI" id="CHEBI:16150"/>
    </ligand>
</feature>
<feature type="binding site" evidence="2">
    <location>
        <position position="59"/>
    </location>
    <ligand>
        <name>S-adenosyl-L-homocysteine</name>
        <dbReference type="ChEBI" id="CHEBI:57856"/>
    </ligand>
</feature>
<feature type="binding site" evidence="2">
    <location>
        <position position="64"/>
    </location>
    <ligand>
        <name>S-adenosyl-L-homocysteine</name>
        <dbReference type="ChEBI" id="CHEBI:57856"/>
    </ligand>
</feature>
<feature type="binding site" evidence="2">
    <location>
        <position position="96"/>
    </location>
    <ligand>
        <name>S-adenosyl-L-homocysteine</name>
        <dbReference type="ChEBI" id="CHEBI:57856"/>
    </ligand>
</feature>
<feature type="binding site" evidence="1">
    <location>
        <position position="97"/>
    </location>
    <ligand>
        <name>S-adenosyl-L-homocysteine</name>
        <dbReference type="ChEBI" id="CHEBI:57856"/>
    </ligand>
</feature>
<feature type="binding site" evidence="2">
    <location>
        <position position="135"/>
    </location>
    <ligand>
        <name>S-adenosyl-L-homocysteine</name>
        <dbReference type="ChEBI" id="CHEBI:57856"/>
    </ligand>
</feature>
<feature type="binding site" evidence="2">
    <location>
        <position position="136"/>
    </location>
    <ligand>
        <name>S-adenosyl-L-homocysteine</name>
        <dbReference type="ChEBI" id="CHEBI:57856"/>
    </ligand>
</feature>
<feature type="binding site" evidence="2">
    <location>
        <position position="157"/>
    </location>
    <ligand>
        <name>benzoate</name>
        <dbReference type="ChEBI" id="CHEBI:16150"/>
    </ligand>
</feature>
<feature type="binding site" evidence="3">
    <location>
        <position position="168"/>
    </location>
    <ligand>
        <name>Mg(2+)</name>
        <dbReference type="ChEBI" id="CHEBI:18420"/>
    </ligand>
</feature>
<feature type="binding site" evidence="3">
    <location>
        <position position="254"/>
    </location>
    <ligand>
        <name>Mg(2+)</name>
        <dbReference type="ChEBI" id="CHEBI:18420"/>
    </ligand>
</feature>
<feature type="binding site" evidence="3">
    <location>
        <position position="256"/>
    </location>
    <ligand>
        <name>Mg(2+)</name>
        <dbReference type="ChEBI" id="CHEBI:18420"/>
    </ligand>
</feature>
<feature type="binding site" evidence="3">
    <location>
        <position position="257"/>
    </location>
    <ligand>
        <name>Mg(2+)</name>
        <dbReference type="ChEBI" id="CHEBI:18420"/>
    </ligand>
</feature>
<feature type="binding site" evidence="2">
    <location>
        <position position="260"/>
    </location>
    <ligand>
        <name>benzoate</name>
        <dbReference type="ChEBI" id="CHEBI:16150"/>
    </ligand>
</feature>
<feature type="site" description="Involved in substrate discrimination" evidence="4">
    <location>
        <position position="150"/>
    </location>
</feature>
<dbReference type="EC" id="2.1.1.273" evidence="5"/>
<dbReference type="EC" id="2.1.1.274" evidence="5"/>
<dbReference type="EMBL" id="AY233466">
    <property type="protein sequence ID" value="AAO45013.1"/>
    <property type="molecule type" value="mRNA"/>
</dbReference>
<dbReference type="SMR" id="Q84UB4"/>
<dbReference type="GO" id="GO:0046872">
    <property type="term" value="F:metal ion binding"/>
    <property type="evidence" value="ECO:0007669"/>
    <property type="project" value="UniProtKB-KW"/>
</dbReference>
<dbReference type="GO" id="GO:0008168">
    <property type="term" value="F:methyltransferase activity"/>
    <property type="evidence" value="ECO:0000314"/>
    <property type="project" value="UniProtKB"/>
</dbReference>
<dbReference type="GO" id="GO:0032259">
    <property type="term" value="P:methylation"/>
    <property type="evidence" value="ECO:0007669"/>
    <property type="project" value="UniProtKB-KW"/>
</dbReference>
<dbReference type="GO" id="GO:0009856">
    <property type="term" value="P:pollination"/>
    <property type="evidence" value="ECO:0000314"/>
    <property type="project" value="UniProtKB"/>
</dbReference>
<dbReference type="GO" id="GO:0009723">
    <property type="term" value="P:response to ethylene"/>
    <property type="evidence" value="ECO:0000270"/>
    <property type="project" value="UniProtKB"/>
</dbReference>
<dbReference type="Gene3D" id="1.10.1200.270">
    <property type="entry name" value="Methyltransferase, alpha-helical capping domain"/>
    <property type="match status" value="1"/>
</dbReference>
<dbReference type="Gene3D" id="3.40.50.150">
    <property type="entry name" value="Vaccinia Virus protein VP39"/>
    <property type="match status" value="1"/>
</dbReference>
<dbReference type="InterPro" id="IPR005299">
    <property type="entry name" value="MeTrfase_7"/>
</dbReference>
<dbReference type="InterPro" id="IPR042086">
    <property type="entry name" value="MeTrfase_capping"/>
</dbReference>
<dbReference type="InterPro" id="IPR029063">
    <property type="entry name" value="SAM-dependent_MTases_sf"/>
</dbReference>
<dbReference type="PANTHER" id="PTHR31009">
    <property type="entry name" value="S-ADENOSYL-L-METHIONINE:CARBOXYL METHYLTRANSFERASE FAMILY PROTEIN"/>
    <property type="match status" value="1"/>
</dbReference>
<dbReference type="Pfam" id="PF03492">
    <property type="entry name" value="Methyltransf_7"/>
    <property type="match status" value="1"/>
</dbReference>
<dbReference type="SUPFAM" id="SSF53335">
    <property type="entry name" value="S-adenosyl-L-methionine-dependent methyltransferases"/>
    <property type="match status" value="1"/>
</dbReference>
<evidence type="ECO:0000250" key="1">
    <source>
        <dbReference type="UniProtKB" id="A0A6C0WW36"/>
    </source>
</evidence>
<evidence type="ECO:0000250" key="2">
    <source>
        <dbReference type="UniProtKB" id="B2KPR3"/>
    </source>
</evidence>
<evidence type="ECO:0000250" key="3">
    <source>
        <dbReference type="UniProtKB" id="Q9FLN8"/>
    </source>
</evidence>
<evidence type="ECO:0000250" key="4">
    <source>
        <dbReference type="UniProtKB" id="Q9FZN8"/>
    </source>
</evidence>
<evidence type="ECO:0000269" key="5">
    <source>
    </source>
</evidence>
<evidence type="ECO:0000269" key="6">
    <source>
    </source>
</evidence>
<evidence type="ECO:0000303" key="7">
    <source>
    </source>
</evidence>
<evidence type="ECO:0000305" key="8"/>